<accession>B7H1Q6</accession>
<protein>
    <recommendedName>
        <fullName evidence="1">Transcriptional repressor NrdR</fullName>
    </recommendedName>
</protein>
<comment type="function">
    <text evidence="1">Negatively regulates transcription of bacterial ribonucleotide reductase nrd genes and operons by binding to NrdR-boxes.</text>
</comment>
<comment type="cofactor">
    <cofactor evidence="1">
        <name>Zn(2+)</name>
        <dbReference type="ChEBI" id="CHEBI:29105"/>
    </cofactor>
    <text evidence="1">Binds 1 zinc ion.</text>
</comment>
<comment type="similarity">
    <text evidence="1">Belongs to the NrdR family.</text>
</comment>
<feature type="chain" id="PRO_1000191767" description="Transcriptional repressor NrdR">
    <location>
        <begin position="1"/>
        <end position="152"/>
    </location>
</feature>
<feature type="domain" description="ATP-cone" evidence="1">
    <location>
        <begin position="49"/>
        <end position="139"/>
    </location>
</feature>
<feature type="zinc finger region" evidence="1">
    <location>
        <begin position="3"/>
        <end position="34"/>
    </location>
</feature>
<reference key="1">
    <citation type="journal article" date="2008" name="J. Bacteriol.">
        <title>Comparative genome sequence analysis of multidrug-resistant Acinetobacter baumannii.</title>
        <authorList>
            <person name="Adams M.D."/>
            <person name="Goglin K."/>
            <person name="Molyneaux N."/>
            <person name="Hujer K.M."/>
            <person name="Lavender H."/>
            <person name="Jamison J.J."/>
            <person name="MacDonald I.J."/>
            <person name="Martin K.M."/>
            <person name="Russo T."/>
            <person name="Campagnari A.A."/>
            <person name="Hujer A.M."/>
            <person name="Bonomo R.A."/>
            <person name="Gill S.R."/>
        </authorList>
    </citation>
    <scope>NUCLEOTIDE SEQUENCE [LARGE SCALE GENOMIC DNA]</scope>
    <source>
        <strain>AB307-0294</strain>
    </source>
</reference>
<keyword id="KW-0067">ATP-binding</keyword>
<keyword id="KW-0238">DNA-binding</keyword>
<keyword id="KW-0479">Metal-binding</keyword>
<keyword id="KW-0547">Nucleotide-binding</keyword>
<keyword id="KW-0678">Repressor</keyword>
<keyword id="KW-0804">Transcription</keyword>
<keyword id="KW-0805">Transcription regulation</keyword>
<keyword id="KW-0862">Zinc</keyword>
<keyword id="KW-0863">Zinc-finger</keyword>
<proteinExistence type="inferred from homology"/>
<evidence type="ECO:0000255" key="1">
    <source>
        <dbReference type="HAMAP-Rule" id="MF_00440"/>
    </source>
</evidence>
<organism>
    <name type="scientific">Acinetobacter baumannii (strain AB307-0294)</name>
    <dbReference type="NCBI Taxonomy" id="557600"/>
    <lineage>
        <taxon>Bacteria</taxon>
        <taxon>Pseudomonadati</taxon>
        <taxon>Pseudomonadota</taxon>
        <taxon>Gammaproteobacteria</taxon>
        <taxon>Moraxellales</taxon>
        <taxon>Moraxellaceae</taxon>
        <taxon>Acinetobacter</taxon>
        <taxon>Acinetobacter calcoaceticus/baumannii complex</taxon>
    </lineage>
</organism>
<sequence length="152" mass="17808">MHCPFCNAADSKVIDSRLAAEGCQIRRRRECVSCGERFTTFESYEVVMPRVIKSNGKNEPFDEAKLRRSLMHALQKRPVTQEQIETVLSDIQLQIRRLGERDVKSRTIGEIVMQSLFALDHVAYVRFASVYQDFQDVEAFRRQIEQMQQREH</sequence>
<dbReference type="EMBL" id="CP001172">
    <property type="protein sequence ID" value="ACJ57639.1"/>
    <property type="molecule type" value="Genomic_DNA"/>
</dbReference>
<dbReference type="RefSeq" id="WP_000543541.1">
    <property type="nucleotide sequence ID" value="NZ_CP001172.1"/>
</dbReference>
<dbReference type="SMR" id="B7H1Q6"/>
<dbReference type="GeneID" id="92892221"/>
<dbReference type="HOGENOM" id="CLU_108412_0_0_6"/>
<dbReference type="Proteomes" id="UP000006924">
    <property type="component" value="Chromosome"/>
</dbReference>
<dbReference type="GO" id="GO:0005524">
    <property type="term" value="F:ATP binding"/>
    <property type="evidence" value="ECO:0007669"/>
    <property type="project" value="UniProtKB-KW"/>
</dbReference>
<dbReference type="GO" id="GO:0003677">
    <property type="term" value="F:DNA binding"/>
    <property type="evidence" value="ECO:0007669"/>
    <property type="project" value="UniProtKB-KW"/>
</dbReference>
<dbReference type="GO" id="GO:0008270">
    <property type="term" value="F:zinc ion binding"/>
    <property type="evidence" value="ECO:0007669"/>
    <property type="project" value="UniProtKB-UniRule"/>
</dbReference>
<dbReference type="GO" id="GO:0045892">
    <property type="term" value="P:negative regulation of DNA-templated transcription"/>
    <property type="evidence" value="ECO:0007669"/>
    <property type="project" value="UniProtKB-UniRule"/>
</dbReference>
<dbReference type="HAMAP" id="MF_00440">
    <property type="entry name" value="NrdR"/>
    <property type="match status" value="1"/>
</dbReference>
<dbReference type="InterPro" id="IPR005144">
    <property type="entry name" value="ATP-cone_dom"/>
</dbReference>
<dbReference type="InterPro" id="IPR055173">
    <property type="entry name" value="NrdR-like_N"/>
</dbReference>
<dbReference type="InterPro" id="IPR003796">
    <property type="entry name" value="RNR_NrdR-like"/>
</dbReference>
<dbReference type="NCBIfam" id="TIGR00244">
    <property type="entry name" value="transcriptional regulator NrdR"/>
    <property type="match status" value="1"/>
</dbReference>
<dbReference type="PANTHER" id="PTHR30455">
    <property type="entry name" value="TRANSCRIPTIONAL REPRESSOR NRDR"/>
    <property type="match status" value="1"/>
</dbReference>
<dbReference type="PANTHER" id="PTHR30455:SF2">
    <property type="entry name" value="TRANSCRIPTIONAL REPRESSOR NRDR"/>
    <property type="match status" value="1"/>
</dbReference>
<dbReference type="Pfam" id="PF03477">
    <property type="entry name" value="ATP-cone"/>
    <property type="match status" value="1"/>
</dbReference>
<dbReference type="Pfam" id="PF22811">
    <property type="entry name" value="Zn_ribbon_NrdR"/>
    <property type="match status" value="1"/>
</dbReference>
<dbReference type="PROSITE" id="PS51161">
    <property type="entry name" value="ATP_CONE"/>
    <property type="match status" value="1"/>
</dbReference>
<gene>
    <name evidence="1" type="primary">nrdR</name>
    <name type="ordered locus">ABBFA_003311</name>
</gene>
<name>NRDR_ACIB3</name>